<keyword id="KW-0025">Alternative splicing</keyword>
<keyword id="KW-0067">ATP-binding</keyword>
<keyword id="KW-0458">Lysosome</keyword>
<keyword id="KW-0472">Membrane</keyword>
<keyword id="KW-0547">Nucleotide-binding</keyword>
<keyword id="KW-0571">Peptide transport</keyword>
<keyword id="KW-0653">Protein transport</keyword>
<keyword id="KW-1185">Reference proteome</keyword>
<keyword id="KW-1278">Translocase</keyword>
<keyword id="KW-0812">Transmembrane</keyword>
<keyword id="KW-1133">Transmembrane helix</keyword>
<keyword id="KW-0813">Transport</keyword>
<comment type="function">
    <text evidence="1">ATP-dependent low-affinity peptide transporter which translocates a broad spectrum of peptides from the cytosol to the lysosomal lumen for degradation. Displays a broad peptide length specificity from 6-mer up to at least 59-mer peptides with an optimum of 23-mers. Binds and transports smaller and larger peptides with the same affinity. Favors positively charged, aromatic or hydrophobic residues in the N- and C-terminal positions whereas negatively charged residues as well as asparagine and methionine are not favored.</text>
</comment>
<comment type="catalytic activity">
    <reaction evidence="1">
        <text>a [oligopeptide](in) + ATP + H2O = a [oligopeptide](out) + ADP + phosphate + H(+)</text>
        <dbReference type="Rhea" id="RHEA:14429"/>
        <dbReference type="Rhea" id="RHEA-COMP:10531"/>
        <dbReference type="ChEBI" id="CHEBI:15377"/>
        <dbReference type="ChEBI" id="CHEBI:15378"/>
        <dbReference type="ChEBI" id="CHEBI:30616"/>
        <dbReference type="ChEBI" id="CHEBI:43474"/>
        <dbReference type="ChEBI" id="CHEBI:83228"/>
        <dbReference type="ChEBI" id="CHEBI:456216"/>
        <dbReference type="EC" id="7.4.2.6"/>
    </reaction>
    <physiologicalReaction direction="left-to-right" evidence="1">
        <dbReference type="Rhea" id="RHEA:14430"/>
    </physiologicalReaction>
</comment>
<comment type="subunit">
    <text evidence="1 6">Homodimer (PubMed:18175933). Interacts (via TMD0 region) with LAMP1; this interaction strongly stabilizes ABCB9 and protects ABCB9 against lysosomal degradation. Interacts (via TMD0 region) with LAMP2 (isoform LAMP-2B). Interacts (via TMD0) with YIF1B; this interaction allows (but is not essential) the ER-to-Golgi trafficking and strongly depends on a salt bridge within TMD0 (By similarity).</text>
</comment>
<comment type="subcellular location">
    <subcellularLocation>
        <location evidence="1">Lysosome membrane</location>
        <topology evidence="1 3">Multi-pass membrane protein</topology>
    </subcellularLocation>
    <text evidence="1">May be located in membrane rafts. Takes an intracellular route from the endoplasmic reticulum (ER), via Golgi and early endosomes to late endosomal and lysosomal compartments.</text>
</comment>
<comment type="alternative products">
    <event type="alternative splicing"/>
    <isoform>
        <id>Q9QYJ4-1</id>
        <name>1</name>
        <name>TAPLa</name>
        <name>C-I</name>
        <sequence type="displayed"/>
    </isoform>
    <isoform>
        <id>Q9QYJ4-2</id>
        <name>2</name>
        <name>TAPLb</name>
        <name>C-II</name>
        <sequence type="described" ref="VSP_000034"/>
    </isoform>
    <isoform>
        <id>Q9QYJ4-3</id>
        <name>3</name>
        <name>C-III</name>
        <sequence type="described" ref="VSP_041888"/>
    </isoform>
    <isoform>
        <id>Q9QYJ4-4</id>
        <name>4</name>
        <name>C-IV</name>
        <sequence type="described" ref="VSP_041887"/>
    </isoform>
</comment>
<comment type="tissue specificity">
    <text evidence="4 5">Found in testis, particularly in the Sertoli cells of the seminiferous tubules. Also expressed in kidney, brain, heart, lung, spleen, thymus, intestine and testis. Higher expression detected in brain and testis than in thymus and intestine.</text>
</comment>
<comment type="domain">
    <text evidence="1">Divided into an N-terminal domain (TMD0) comprising four transmembrane helices and the following core domain (coreABCB9). TMD0 is required for lysosomal localization and LAMP1, LAMP2 and YIF1B interaction. The core domain is required for homodimerization and peptide transport activity.</text>
</comment>
<comment type="similarity">
    <text evidence="9">Belongs to the ABC transporter superfamily. ABCB family. MHC peptide exporter (TC 3.A.1.209) subfamily.</text>
</comment>
<evidence type="ECO:0000250" key="1">
    <source>
        <dbReference type="UniProtKB" id="Q9NP78"/>
    </source>
</evidence>
<evidence type="ECO:0000255" key="2">
    <source>
        <dbReference type="PROSITE-ProRule" id="PRU00434"/>
    </source>
</evidence>
<evidence type="ECO:0000255" key="3">
    <source>
        <dbReference type="PROSITE-ProRule" id="PRU00441"/>
    </source>
</evidence>
<evidence type="ECO:0000269" key="4">
    <source>
    </source>
</evidence>
<evidence type="ECO:0000269" key="5">
    <source>
    </source>
</evidence>
<evidence type="ECO:0000269" key="6">
    <source>
    </source>
</evidence>
<evidence type="ECO:0000303" key="7">
    <source>
    </source>
</evidence>
<evidence type="ECO:0000303" key="8">
    <source>
    </source>
</evidence>
<evidence type="ECO:0000305" key="9"/>
<evidence type="ECO:0000312" key="10">
    <source>
        <dbReference type="RGD" id="620254"/>
    </source>
</evidence>
<organism>
    <name type="scientific">Rattus norvegicus</name>
    <name type="common">Rat</name>
    <dbReference type="NCBI Taxonomy" id="10116"/>
    <lineage>
        <taxon>Eukaryota</taxon>
        <taxon>Metazoa</taxon>
        <taxon>Chordata</taxon>
        <taxon>Craniata</taxon>
        <taxon>Vertebrata</taxon>
        <taxon>Euteleostomi</taxon>
        <taxon>Mammalia</taxon>
        <taxon>Eutheria</taxon>
        <taxon>Euarchontoglires</taxon>
        <taxon>Glires</taxon>
        <taxon>Rodentia</taxon>
        <taxon>Myomorpha</taxon>
        <taxon>Muroidea</taxon>
        <taxon>Muridae</taxon>
        <taxon>Murinae</taxon>
        <taxon>Rattus</taxon>
    </lineage>
</organism>
<name>ABCB9_RAT</name>
<reference key="1">
    <citation type="journal article" date="1999" name="FEBS Lett.">
        <title>An ABC transporter homologous to TAP proteins.</title>
        <authorList>
            <person name="Yamaguchi Y."/>
            <person name="Kasano M."/>
            <person name="Terada T."/>
            <person name="Sato R."/>
            <person name="Maeda M."/>
        </authorList>
    </citation>
    <scope>NUCLEOTIDE SEQUENCE [MRNA] (ISOFORMS 1 AND 2)</scope>
    <scope>TISSUE SPECIFICITY</scope>
    <source>
        <tissue>Intestine</tissue>
        <tissue>Kidney</tissue>
    </source>
</reference>
<reference key="2">
    <citation type="journal article" date="2004" name="Biol. Pharm. Bull.">
        <title>The carboxyl terminal sequence of rat transporter associated with antigen processing (TAP)-like (ABCB9) is heterogeneous due to splicing of its mRNA.</title>
        <authorList>
            <person name="Yamaguchi Y."/>
            <person name="Iseoka H."/>
            <person name="Kobayashi A."/>
            <person name="Maeda M."/>
        </authorList>
    </citation>
    <scope>NUCLEOTIDE SEQUENCE [MRNA] (ISOFORMS 3 AND 4)</scope>
    <scope>TISSUE SPECIFICITY</scope>
    <source>
        <strain>Sprague-Dawley</strain>
    </source>
</reference>
<reference key="3">
    <citation type="journal article" date="2008" name="Biol. Pharm. Bull.">
        <title>Biochemical characterization of transporter associated with antigen processing (TAP)-like (ABCB9) expressed in insect cells.</title>
        <authorList>
            <person name="Ohara T."/>
            <person name="Ohashi-Kobayashi A."/>
            <person name="Maeda M."/>
        </authorList>
    </citation>
    <scope>SUBUNIT</scope>
</reference>
<sequence length="762" mass="84033">MRLWKAVVVTLAFVSMDVGVTTAIYAFSHLDRSLLEDIRHFNIFDSVLDLWAACLYRSCLLLGATIGVAKNSALGPRRLRASWLVITLVCLFVGIYAMAKLLLFSEVRRPIRDPWFWALFVWTYISLAASFLLWGLLATVRPDAEALEPGNEGFHGEGGAPAEQASGATLQKLLSYTKPDVAFLVAASFFLIVAALGETFLPYYTGRAIDSIVIQKSMDQFTTAVVVVCLLAIGSSLAAGIRGGIFTLVFARLNIRLRNCLFRSLVSQETSFFDENRTGDLISRLTSDTTMVSDLVSQNINIFLRNTVKVTGVVVFMFSLSWQLSLVTFMGFPIIMMVSNIYGKYYKRLSKEVQSALARASTTAEETISAMKTVRSFANEEEEAEVFLRKLQQVYKLNRKEAAAYMSYVWGSGLTLLVVQVSILYYGGHLVISGQMSSGNLIAFIIYEFVLGDCMESVGSVYSGLMQGVGAAEKVFEFIDRQPTMVHDGRLAPDHLEGRVDFENVTFTYRTRPHTQVLQNVSFSLSPGKVTALVGPSGSGKSSCVNILENFYPLQGGRVLLDGEPIGAYDHKYLHRVISLVSQEPVLFARSITDNISYGLPTVPFEMVVEAAQKANAHGFIMELQDGYSTETGEKGAQLSGGQKQRVAMARALVRNPPVLILDEATSALDAESEYLIQQAIHGNLQRHTVLIIAHRLSTVERAHLIVVLDKGRVVQQGTHQQLLAQGGLYAKLVQRQMLGLEHPLDYTAGHKEPPSNTEHKA</sequence>
<accession>Q9QYJ4</accession>
<accession>Q764Q5</accession>
<accession>Q764Q6</accession>
<protein>
    <recommendedName>
        <fullName evidence="1">ABC-type oligopeptide transporter ABCB9</fullName>
        <ecNumber evidence="1">7.4.2.6</ecNumber>
    </recommendedName>
    <alternativeName>
        <fullName>ATP-binding cassette sub-family B member 9</fullName>
    </alternativeName>
    <alternativeName>
        <fullName>ATP-binding cassette transporter 9</fullName>
        <shortName>ABC transporter 9 protein</shortName>
    </alternativeName>
    <alternativeName>
        <fullName evidence="7">TAP-like protein</fullName>
        <shortName evidence="7">TAPL</shortName>
    </alternativeName>
</protein>
<gene>
    <name evidence="10" type="primary">Abcb9</name>
</gene>
<feature type="chain" id="PRO_0000000254" description="ABC-type oligopeptide transporter ABCB9">
    <location>
        <begin position="1"/>
        <end position="762"/>
    </location>
</feature>
<feature type="transmembrane region" description="Helical" evidence="3">
    <location>
        <begin position="7"/>
        <end position="27"/>
    </location>
</feature>
<feature type="transmembrane region" description="Helical" evidence="3">
    <location>
        <begin position="47"/>
        <end position="67"/>
    </location>
</feature>
<feature type="transmembrane region" description="Helical" evidence="3">
    <location>
        <begin position="84"/>
        <end position="104"/>
    </location>
</feature>
<feature type="transmembrane region" description="Helical" evidence="3">
    <location>
        <begin position="116"/>
        <end position="136"/>
    </location>
</feature>
<feature type="transmembrane region" description="Helical" evidence="3">
    <location>
        <begin position="181"/>
        <end position="201"/>
    </location>
</feature>
<feature type="transmembrane region" description="Helical" evidence="3">
    <location>
        <begin position="221"/>
        <end position="241"/>
    </location>
</feature>
<feature type="transmembrane region" description="Helical" evidence="3">
    <location>
        <begin position="315"/>
        <end position="335"/>
    </location>
</feature>
<feature type="transmembrane region" description="Helical" evidence="3">
    <location>
        <begin position="412"/>
        <end position="432"/>
    </location>
</feature>
<feature type="domain" description="ABC transmembrane type-1" evidence="3">
    <location>
        <begin position="184"/>
        <end position="467"/>
    </location>
</feature>
<feature type="domain" description="ABC transporter" evidence="2">
    <location>
        <begin position="500"/>
        <end position="736"/>
    </location>
</feature>
<feature type="binding site" evidence="2">
    <location>
        <begin position="535"/>
        <end position="542"/>
    </location>
    <ligand>
        <name>ATP</name>
        <dbReference type="ChEBI" id="CHEBI:30616"/>
    </ligand>
</feature>
<feature type="site" description="Intramolecular salt bridge with Arg-57. Essential for the release from the ER" evidence="1">
    <location>
        <position position="17"/>
    </location>
</feature>
<feature type="site" description="Important for the second trafficking step from the Golgi to the endosomal and lysosomal compartments" evidence="1">
    <location>
        <position position="45"/>
    </location>
</feature>
<feature type="site" description="Important for the second trafficking step from the Golgi to the endosomal and lysosomal compartments" evidence="1">
    <location>
        <position position="49"/>
    </location>
</feature>
<feature type="site" description="Intramolecular salt bridge with Asp-17. Essential for the release from the ER" evidence="1">
    <location>
        <position position="57"/>
    </location>
</feature>
<feature type="splice variant" id="VSP_041888" description="In isoform 3." evidence="8">
    <original>IQQAIHGNLQRHTVLIIAHRLSTVERAHLIVVLDKGRVVQQGTHQQLLAQGGLYAKLVQRQMLGLEHPLDYTAGHKEPPSNTEHKA</original>
    <variation>VALADLKYREIHPSPQD</variation>
    <location>
        <begin position="677"/>
        <end position="762"/>
    </location>
</feature>
<feature type="splice variant" id="VSP_041887" description="In isoform 4." evidence="8">
    <original>IQQAIHGNLQRHTVLIIAHRLSTVERAHLIVVLDKGRVVQQGTHQQLLAQGGLYAKLVQRQMLGLEHPLDYTAGHKEPPSNTEHKA</original>
    <variation>SEAQTPGLEHTPHPATTAWLEATLSPKPGCQG</variation>
    <location>
        <begin position="677"/>
        <end position="762"/>
    </location>
</feature>
<feature type="splice variant" id="VSP_000034" description="In isoform 2." evidence="7">
    <original>QQLLAQGGLYAKLVQRQMLGLEHPLDYTAGHKEPPSNTEHKA</original>
    <variation>LPLLSTPATLQRNLVCKMYSQIGGGDRGNAQGLALSWFKILGELGQ</variation>
    <location>
        <begin position="721"/>
        <end position="762"/>
    </location>
</feature>
<proteinExistence type="evidence at protein level"/>
<dbReference type="EC" id="7.4.2.6" evidence="1"/>
<dbReference type="EMBL" id="AB027520">
    <property type="protein sequence ID" value="BAA85306.1"/>
    <property type="molecule type" value="mRNA"/>
</dbReference>
<dbReference type="EMBL" id="AB116264">
    <property type="protein sequence ID" value="BAD10852.1"/>
    <property type="molecule type" value="mRNA"/>
</dbReference>
<dbReference type="EMBL" id="AB116265">
    <property type="protein sequence ID" value="BAD10853.1"/>
    <property type="molecule type" value="mRNA"/>
</dbReference>
<dbReference type="RefSeq" id="NP_071574.1">
    <molecule id="Q9QYJ4-1"/>
    <property type="nucleotide sequence ID" value="NM_022238.3"/>
</dbReference>
<dbReference type="RefSeq" id="XP_063127680.1">
    <molecule id="Q9QYJ4-1"/>
    <property type="nucleotide sequence ID" value="XM_063271610.1"/>
</dbReference>
<dbReference type="RefSeq" id="XP_063127681.1">
    <molecule id="Q9QYJ4-4"/>
    <property type="nucleotide sequence ID" value="XM_063271611.1"/>
</dbReference>
<dbReference type="RefSeq" id="XP_063127682.1">
    <molecule id="Q9QYJ4-3"/>
    <property type="nucleotide sequence ID" value="XM_063271612.1"/>
</dbReference>
<dbReference type="SMR" id="Q9QYJ4"/>
<dbReference type="FunCoup" id="Q9QYJ4">
    <property type="interactions" value="457"/>
</dbReference>
<dbReference type="STRING" id="10116.ENSRNOP00000051058"/>
<dbReference type="PhosphoSitePlus" id="Q9QYJ4"/>
<dbReference type="PaxDb" id="10116-ENSRNOP00000051058"/>
<dbReference type="Ensembl" id="ENSRNOT00000045223.6">
    <molecule id="Q9QYJ4-3"/>
    <property type="protein sequence ID" value="ENSRNOP00000051058.5"/>
    <property type="gene ID" value="ENSRNOG00000001082.8"/>
</dbReference>
<dbReference type="Ensembl" id="ENSRNOT00000098844.1">
    <molecule id="Q9QYJ4-1"/>
    <property type="protein sequence ID" value="ENSRNOP00000096168.1"/>
    <property type="gene ID" value="ENSRNOG00000001082.8"/>
</dbReference>
<dbReference type="Ensembl" id="ENSRNOT00000114288.1">
    <molecule id="Q9QYJ4-4"/>
    <property type="protein sequence ID" value="ENSRNOP00000083417.1"/>
    <property type="gene ID" value="ENSRNOG00000001082.8"/>
</dbReference>
<dbReference type="GeneID" id="63886"/>
<dbReference type="KEGG" id="rno:63886"/>
<dbReference type="UCSC" id="RGD:620254">
    <molecule id="Q9QYJ4-1"/>
    <property type="organism name" value="rat"/>
</dbReference>
<dbReference type="AGR" id="RGD:620254"/>
<dbReference type="CTD" id="23457"/>
<dbReference type="RGD" id="620254">
    <property type="gene designation" value="Abcb9"/>
</dbReference>
<dbReference type="eggNOG" id="KOG0058">
    <property type="taxonomic scope" value="Eukaryota"/>
</dbReference>
<dbReference type="GeneTree" id="ENSGT00940000155431"/>
<dbReference type="InParanoid" id="Q9QYJ4"/>
<dbReference type="OMA" id="CRLYEPQ"/>
<dbReference type="OrthoDB" id="6500128at2759"/>
<dbReference type="PhylomeDB" id="Q9QYJ4"/>
<dbReference type="TreeFam" id="TF105197"/>
<dbReference type="Reactome" id="R-RNO-382556">
    <property type="pathway name" value="ABC-family proteins mediated transport"/>
</dbReference>
<dbReference type="PRO" id="PR:Q9QYJ4"/>
<dbReference type="Proteomes" id="UP000002494">
    <property type="component" value="Chromosome 12"/>
</dbReference>
<dbReference type="GO" id="GO:0043190">
    <property type="term" value="C:ATP-binding cassette (ABC) transporter complex"/>
    <property type="evidence" value="ECO:0000304"/>
    <property type="project" value="RGD"/>
</dbReference>
<dbReference type="GO" id="GO:0005789">
    <property type="term" value="C:endoplasmic reticulum membrane"/>
    <property type="evidence" value="ECO:0000266"/>
    <property type="project" value="RGD"/>
</dbReference>
<dbReference type="GO" id="GO:0005765">
    <property type="term" value="C:lysosomal membrane"/>
    <property type="evidence" value="ECO:0000250"/>
    <property type="project" value="UniProtKB"/>
</dbReference>
<dbReference type="GO" id="GO:0005764">
    <property type="term" value="C:lysosome"/>
    <property type="evidence" value="ECO:0000250"/>
    <property type="project" value="UniProtKB"/>
</dbReference>
<dbReference type="GO" id="GO:0016020">
    <property type="term" value="C:membrane"/>
    <property type="evidence" value="ECO:0000266"/>
    <property type="project" value="RGD"/>
</dbReference>
<dbReference type="GO" id="GO:0015421">
    <property type="term" value="F:ABC-type oligopeptide transporter activity"/>
    <property type="evidence" value="ECO:0000250"/>
    <property type="project" value="UniProtKB"/>
</dbReference>
<dbReference type="GO" id="GO:0015440">
    <property type="term" value="F:ABC-type peptide transporter activity"/>
    <property type="evidence" value="ECO:0000266"/>
    <property type="project" value="RGD"/>
</dbReference>
<dbReference type="GO" id="GO:0005524">
    <property type="term" value="F:ATP binding"/>
    <property type="evidence" value="ECO:0000266"/>
    <property type="project" value="RGD"/>
</dbReference>
<dbReference type="GO" id="GO:0016887">
    <property type="term" value="F:ATP hydrolysis activity"/>
    <property type="evidence" value="ECO:0007669"/>
    <property type="project" value="InterPro"/>
</dbReference>
<dbReference type="GO" id="GO:0042626">
    <property type="term" value="F:ATPase-coupled transmembrane transporter activity"/>
    <property type="evidence" value="ECO:0000304"/>
    <property type="project" value="RGD"/>
</dbReference>
<dbReference type="GO" id="GO:0042803">
    <property type="term" value="F:protein homodimerization activity"/>
    <property type="evidence" value="ECO:0000266"/>
    <property type="project" value="RGD"/>
</dbReference>
<dbReference type="GO" id="GO:0022857">
    <property type="term" value="F:transmembrane transporter activity"/>
    <property type="evidence" value="ECO:0000266"/>
    <property type="project" value="RGD"/>
</dbReference>
<dbReference type="GO" id="GO:0006518">
    <property type="term" value="P:peptide metabolic process"/>
    <property type="evidence" value="ECO:0000250"/>
    <property type="project" value="UniProtKB"/>
</dbReference>
<dbReference type="GO" id="GO:0015833">
    <property type="term" value="P:peptide transport"/>
    <property type="evidence" value="ECO:0000250"/>
    <property type="project" value="UniProtKB"/>
</dbReference>
<dbReference type="GO" id="GO:0015031">
    <property type="term" value="P:protein transport"/>
    <property type="evidence" value="ECO:0007669"/>
    <property type="project" value="UniProtKB-KW"/>
</dbReference>
<dbReference type="GO" id="GO:0055085">
    <property type="term" value="P:transmembrane transport"/>
    <property type="evidence" value="ECO:0000318"/>
    <property type="project" value="GO_Central"/>
</dbReference>
<dbReference type="CDD" id="cd18784">
    <property type="entry name" value="ABC_6TM_ABCB9_like"/>
    <property type="match status" value="1"/>
</dbReference>
<dbReference type="CDD" id="cd03248">
    <property type="entry name" value="ABCC_TAP"/>
    <property type="match status" value="1"/>
</dbReference>
<dbReference type="FunFam" id="1.20.1560.10:FF:000031">
    <property type="entry name" value="ATP-binding cassette sub-family B member 9"/>
    <property type="match status" value="1"/>
</dbReference>
<dbReference type="FunFam" id="3.40.50.300:FF:000140">
    <property type="entry name" value="Lipid A export ATP-binding/permease protein MsbA"/>
    <property type="match status" value="1"/>
</dbReference>
<dbReference type="Gene3D" id="1.20.1560.10">
    <property type="entry name" value="ABC transporter type 1, transmembrane domain"/>
    <property type="match status" value="1"/>
</dbReference>
<dbReference type="Gene3D" id="3.40.50.300">
    <property type="entry name" value="P-loop containing nucleotide triphosphate hydrolases"/>
    <property type="match status" value="1"/>
</dbReference>
<dbReference type="InterPro" id="IPR003593">
    <property type="entry name" value="AAA+_ATPase"/>
</dbReference>
<dbReference type="InterPro" id="IPR011527">
    <property type="entry name" value="ABC1_TM_dom"/>
</dbReference>
<dbReference type="InterPro" id="IPR036640">
    <property type="entry name" value="ABC1_TM_sf"/>
</dbReference>
<dbReference type="InterPro" id="IPR003439">
    <property type="entry name" value="ABC_transporter-like_ATP-bd"/>
</dbReference>
<dbReference type="InterPro" id="IPR017871">
    <property type="entry name" value="ABC_transporter-like_CS"/>
</dbReference>
<dbReference type="InterPro" id="IPR030254">
    <property type="entry name" value="ABCB9_6-TMD"/>
</dbReference>
<dbReference type="InterPro" id="IPR027417">
    <property type="entry name" value="P-loop_NTPase"/>
</dbReference>
<dbReference type="InterPro" id="IPR039421">
    <property type="entry name" value="Type_1_exporter"/>
</dbReference>
<dbReference type="PANTHER" id="PTHR43394:SF21">
    <property type="entry name" value="ATP BINDING CASSETTE SUBFAMILY B MEMBER 9"/>
    <property type="match status" value="1"/>
</dbReference>
<dbReference type="PANTHER" id="PTHR43394">
    <property type="entry name" value="ATP-DEPENDENT PERMEASE MDL1, MITOCHONDRIAL"/>
    <property type="match status" value="1"/>
</dbReference>
<dbReference type="Pfam" id="PF00664">
    <property type="entry name" value="ABC_membrane"/>
    <property type="match status" value="1"/>
</dbReference>
<dbReference type="Pfam" id="PF00005">
    <property type="entry name" value="ABC_tran"/>
    <property type="match status" value="1"/>
</dbReference>
<dbReference type="PIRSF" id="PIRSF002773">
    <property type="entry name" value="ABC_prm/ATPase_B"/>
    <property type="match status" value="1"/>
</dbReference>
<dbReference type="PRINTS" id="PR01896">
    <property type="entry name" value="TAP1PROTEIN"/>
</dbReference>
<dbReference type="SMART" id="SM00382">
    <property type="entry name" value="AAA"/>
    <property type="match status" value="1"/>
</dbReference>
<dbReference type="SUPFAM" id="SSF90123">
    <property type="entry name" value="ABC transporter transmembrane region"/>
    <property type="match status" value="1"/>
</dbReference>
<dbReference type="SUPFAM" id="SSF52540">
    <property type="entry name" value="P-loop containing nucleoside triphosphate hydrolases"/>
    <property type="match status" value="1"/>
</dbReference>
<dbReference type="PROSITE" id="PS50929">
    <property type="entry name" value="ABC_TM1F"/>
    <property type="match status" value="1"/>
</dbReference>
<dbReference type="PROSITE" id="PS00211">
    <property type="entry name" value="ABC_TRANSPORTER_1"/>
    <property type="match status" value="1"/>
</dbReference>
<dbReference type="PROSITE" id="PS50893">
    <property type="entry name" value="ABC_TRANSPORTER_2"/>
    <property type="match status" value="1"/>
</dbReference>